<feature type="chain" id="PRO_0000234703" description="Tyrosine--tRNA ligase">
    <location>
        <begin position="1"/>
        <end position="428"/>
    </location>
</feature>
<feature type="domain" description="S4 RNA-binding" evidence="1">
    <location>
        <begin position="358"/>
        <end position="415"/>
    </location>
</feature>
<feature type="short sequence motif" description="'HIGH' region">
    <location>
        <begin position="42"/>
        <end position="51"/>
    </location>
</feature>
<feature type="short sequence motif" description="'KMSKS' region">
    <location>
        <begin position="235"/>
        <end position="239"/>
    </location>
</feature>
<feature type="binding site" evidence="1">
    <location>
        <position position="37"/>
    </location>
    <ligand>
        <name>L-tyrosine</name>
        <dbReference type="ChEBI" id="CHEBI:58315"/>
    </ligand>
</feature>
<feature type="binding site" evidence="1">
    <location>
        <position position="175"/>
    </location>
    <ligand>
        <name>L-tyrosine</name>
        <dbReference type="ChEBI" id="CHEBI:58315"/>
    </ligand>
</feature>
<feature type="binding site" evidence="1">
    <location>
        <position position="179"/>
    </location>
    <ligand>
        <name>L-tyrosine</name>
        <dbReference type="ChEBI" id="CHEBI:58315"/>
    </ligand>
</feature>
<feature type="binding site" evidence="1">
    <location>
        <position position="238"/>
    </location>
    <ligand>
        <name>ATP</name>
        <dbReference type="ChEBI" id="CHEBI:30616"/>
    </ligand>
</feature>
<gene>
    <name evidence="1" type="primary">tyrS</name>
    <name type="ordered locus">jk0860</name>
</gene>
<organism>
    <name type="scientific">Corynebacterium jeikeium (strain K411)</name>
    <dbReference type="NCBI Taxonomy" id="306537"/>
    <lineage>
        <taxon>Bacteria</taxon>
        <taxon>Bacillati</taxon>
        <taxon>Actinomycetota</taxon>
        <taxon>Actinomycetes</taxon>
        <taxon>Mycobacteriales</taxon>
        <taxon>Corynebacteriaceae</taxon>
        <taxon>Corynebacterium</taxon>
    </lineage>
</organism>
<evidence type="ECO:0000255" key="1">
    <source>
        <dbReference type="HAMAP-Rule" id="MF_02006"/>
    </source>
</evidence>
<reference key="1">
    <citation type="journal article" date="2005" name="J. Bacteriol.">
        <title>Complete genome sequence and analysis of the multiresistant nosocomial pathogen Corynebacterium jeikeium K411, a lipid-requiring bacterium of the human skin flora.</title>
        <authorList>
            <person name="Tauch A."/>
            <person name="Kaiser O."/>
            <person name="Hain T."/>
            <person name="Goesmann A."/>
            <person name="Weisshaar B."/>
            <person name="Albersmeier A."/>
            <person name="Bekel T."/>
            <person name="Bischoff N."/>
            <person name="Brune I."/>
            <person name="Chakraborty T."/>
            <person name="Kalinowski J."/>
            <person name="Meyer F."/>
            <person name="Rupp O."/>
            <person name="Schneiker S."/>
            <person name="Viehoever P."/>
            <person name="Puehler A."/>
        </authorList>
    </citation>
    <scope>NUCLEOTIDE SEQUENCE [LARGE SCALE GENOMIC DNA]</scope>
    <source>
        <strain>K411</strain>
    </source>
</reference>
<name>SYY_CORJK</name>
<keyword id="KW-0030">Aminoacyl-tRNA synthetase</keyword>
<keyword id="KW-0067">ATP-binding</keyword>
<keyword id="KW-0963">Cytoplasm</keyword>
<keyword id="KW-0436">Ligase</keyword>
<keyword id="KW-0547">Nucleotide-binding</keyword>
<keyword id="KW-0648">Protein biosynthesis</keyword>
<keyword id="KW-1185">Reference proteome</keyword>
<keyword id="KW-0694">RNA-binding</keyword>
<sequence length="428" mass="47291">MSDNMNIIDELQWRGLINQSTDLEALKEATQNPITLYCGFDPTGSSLHAGHLVPLIMLKRFQQFGHRPITLAGGATGMIGDPRDVGERSMLTEEQIGENMVAIKKQLEAFVDFTEDSDVDSPAVMVNNADWISQMNVIEYLRDVGKNFSLNTMLDRDTVKRRLESDGISYTEFSYMLLQANDYVHLHNEFDCVLQIGGGDQWGNIVSGVDLNRRVNGAKVHGLTVPLVTDAEGNKFGKSTGGGKLWLDPQLTSPYSWYQYFINAGDSVVIDYLRWFTFLSQEEIAELERKVAEEPFKREAQRVLAREMTTLVHGAAATEAVELAAQALFGKAELQDLDEPTLASALQETEVAEVGADATILDLLVESGLEKSKGAARRTVGEGGAYVNNQRIEDIEWSPSAEELLHGSWLVLRKGKKRFAGARVGASS</sequence>
<comment type="function">
    <text evidence="1">Catalyzes the attachment of tyrosine to tRNA(Tyr) in a two-step reaction: tyrosine is first activated by ATP to form Tyr-AMP and then transferred to the acceptor end of tRNA(Tyr).</text>
</comment>
<comment type="catalytic activity">
    <reaction evidence="1">
        <text>tRNA(Tyr) + L-tyrosine + ATP = L-tyrosyl-tRNA(Tyr) + AMP + diphosphate + H(+)</text>
        <dbReference type="Rhea" id="RHEA:10220"/>
        <dbReference type="Rhea" id="RHEA-COMP:9706"/>
        <dbReference type="Rhea" id="RHEA-COMP:9707"/>
        <dbReference type="ChEBI" id="CHEBI:15378"/>
        <dbReference type="ChEBI" id="CHEBI:30616"/>
        <dbReference type="ChEBI" id="CHEBI:33019"/>
        <dbReference type="ChEBI" id="CHEBI:58315"/>
        <dbReference type="ChEBI" id="CHEBI:78442"/>
        <dbReference type="ChEBI" id="CHEBI:78536"/>
        <dbReference type="ChEBI" id="CHEBI:456215"/>
        <dbReference type="EC" id="6.1.1.1"/>
    </reaction>
</comment>
<comment type="subunit">
    <text evidence="1">Homodimer.</text>
</comment>
<comment type="subcellular location">
    <subcellularLocation>
        <location evidence="1">Cytoplasm</location>
    </subcellularLocation>
</comment>
<comment type="similarity">
    <text evidence="1">Belongs to the class-I aminoacyl-tRNA synthetase family. TyrS type 1 subfamily.</text>
</comment>
<protein>
    <recommendedName>
        <fullName evidence="1">Tyrosine--tRNA ligase</fullName>
        <ecNumber evidence="1">6.1.1.1</ecNumber>
    </recommendedName>
    <alternativeName>
        <fullName evidence="1">Tyrosyl-tRNA synthetase</fullName>
        <shortName evidence="1">TyrRS</shortName>
    </alternativeName>
</protein>
<accession>Q4JVY5</accession>
<proteinExistence type="inferred from homology"/>
<dbReference type="EC" id="6.1.1.1" evidence="1"/>
<dbReference type="EMBL" id="CR931997">
    <property type="protein sequence ID" value="CAI37022.1"/>
    <property type="molecule type" value="Genomic_DNA"/>
</dbReference>
<dbReference type="RefSeq" id="WP_011273455.1">
    <property type="nucleotide sequence ID" value="NC_007164.1"/>
</dbReference>
<dbReference type="SMR" id="Q4JVY5"/>
<dbReference type="STRING" id="306537.jk0860"/>
<dbReference type="KEGG" id="cjk:jk0860"/>
<dbReference type="PATRIC" id="fig|306537.10.peg.872"/>
<dbReference type="eggNOG" id="COG0162">
    <property type="taxonomic scope" value="Bacteria"/>
</dbReference>
<dbReference type="HOGENOM" id="CLU_024003_0_2_11"/>
<dbReference type="OrthoDB" id="9804243at2"/>
<dbReference type="Proteomes" id="UP000000545">
    <property type="component" value="Chromosome"/>
</dbReference>
<dbReference type="GO" id="GO:0005829">
    <property type="term" value="C:cytosol"/>
    <property type="evidence" value="ECO:0007669"/>
    <property type="project" value="TreeGrafter"/>
</dbReference>
<dbReference type="GO" id="GO:0005524">
    <property type="term" value="F:ATP binding"/>
    <property type="evidence" value="ECO:0007669"/>
    <property type="project" value="UniProtKB-UniRule"/>
</dbReference>
<dbReference type="GO" id="GO:0003723">
    <property type="term" value="F:RNA binding"/>
    <property type="evidence" value="ECO:0007669"/>
    <property type="project" value="UniProtKB-KW"/>
</dbReference>
<dbReference type="GO" id="GO:0004831">
    <property type="term" value="F:tyrosine-tRNA ligase activity"/>
    <property type="evidence" value="ECO:0007669"/>
    <property type="project" value="UniProtKB-UniRule"/>
</dbReference>
<dbReference type="GO" id="GO:0006437">
    <property type="term" value="P:tyrosyl-tRNA aminoacylation"/>
    <property type="evidence" value="ECO:0007669"/>
    <property type="project" value="UniProtKB-UniRule"/>
</dbReference>
<dbReference type="CDD" id="cd00165">
    <property type="entry name" value="S4"/>
    <property type="match status" value="1"/>
</dbReference>
<dbReference type="CDD" id="cd00805">
    <property type="entry name" value="TyrRS_core"/>
    <property type="match status" value="1"/>
</dbReference>
<dbReference type="FunFam" id="1.10.240.10:FF:000001">
    <property type="entry name" value="Tyrosine--tRNA ligase"/>
    <property type="match status" value="1"/>
</dbReference>
<dbReference type="FunFam" id="3.10.290.10:FF:000014">
    <property type="entry name" value="Tyrosine--tRNA ligase"/>
    <property type="match status" value="1"/>
</dbReference>
<dbReference type="FunFam" id="3.40.50.620:FF:000008">
    <property type="entry name" value="Tyrosine--tRNA ligase"/>
    <property type="match status" value="1"/>
</dbReference>
<dbReference type="Gene3D" id="3.40.50.620">
    <property type="entry name" value="HUPs"/>
    <property type="match status" value="1"/>
</dbReference>
<dbReference type="Gene3D" id="3.10.290.10">
    <property type="entry name" value="RNA-binding S4 domain"/>
    <property type="match status" value="1"/>
</dbReference>
<dbReference type="Gene3D" id="1.10.240.10">
    <property type="entry name" value="Tyrosyl-Transfer RNA Synthetase"/>
    <property type="match status" value="1"/>
</dbReference>
<dbReference type="HAMAP" id="MF_02006">
    <property type="entry name" value="Tyr_tRNA_synth_type1"/>
    <property type="match status" value="1"/>
</dbReference>
<dbReference type="InterPro" id="IPR002305">
    <property type="entry name" value="aa-tRNA-synth_Ic"/>
</dbReference>
<dbReference type="InterPro" id="IPR014729">
    <property type="entry name" value="Rossmann-like_a/b/a_fold"/>
</dbReference>
<dbReference type="InterPro" id="IPR036986">
    <property type="entry name" value="S4_RNA-bd_sf"/>
</dbReference>
<dbReference type="InterPro" id="IPR054608">
    <property type="entry name" value="SYY-like_C"/>
</dbReference>
<dbReference type="InterPro" id="IPR002307">
    <property type="entry name" value="Tyr-tRNA-ligase"/>
</dbReference>
<dbReference type="InterPro" id="IPR024088">
    <property type="entry name" value="Tyr-tRNA-ligase_bac-type"/>
</dbReference>
<dbReference type="InterPro" id="IPR024107">
    <property type="entry name" value="Tyr-tRNA-ligase_bac_1"/>
</dbReference>
<dbReference type="NCBIfam" id="TIGR00234">
    <property type="entry name" value="tyrS"/>
    <property type="match status" value="1"/>
</dbReference>
<dbReference type="PANTHER" id="PTHR11766:SF0">
    <property type="entry name" value="TYROSINE--TRNA LIGASE, MITOCHONDRIAL"/>
    <property type="match status" value="1"/>
</dbReference>
<dbReference type="PANTHER" id="PTHR11766">
    <property type="entry name" value="TYROSYL-TRNA SYNTHETASE"/>
    <property type="match status" value="1"/>
</dbReference>
<dbReference type="Pfam" id="PF22421">
    <property type="entry name" value="SYY_C-terminal"/>
    <property type="match status" value="1"/>
</dbReference>
<dbReference type="Pfam" id="PF00579">
    <property type="entry name" value="tRNA-synt_1b"/>
    <property type="match status" value="1"/>
</dbReference>
<dbReference type="PRINTS" id="PR01040">
    <property type="entry name" value="TRNASYNTHTYR"/>
</dbReference>
<dbReference type="SUPFAM" id="SSF55174">
    <property type="entry name" value="Alpha-L RNA-binding motif"/>
    <property type="match status" value="1"/>
</dbReference>
<dbReference type="SUPFAM" id="SSF52374">
    <property type="entry name" value="Nucleotidylyl transferase"/>
    <property type="match status" value="1"/>
</dbReference>
<dbReference type="PROSITE" id="PS50889">
    <property type="entry name" value="S4"/>
    <property type="match status" value="1"/>
</dbReference>